<accession>Q8I6U4</accession>
<sequence length="484" mass="55927">MDYNMDYAPHEVISQQGERFVDKYVDRKILKNKKSLLVIISLSVLSVVGFVLFYFTPNSRKSDLFKNSSVENNNDDYIINSLLKSPNGKKFIVSKIDEALSFYDSKKNDINKYNEGNNNNNADFKGLSLFKENTPSNNFIHNKDYFINFFDNKFLMNNAEHINQFYMFIKTNNKQYNSPNEMKERFQVFLQNAHKVNMHNNNKNSLYKKELNRFADLTYHEFKNKYLSLRSSKPLKNSKYLLDQMNYEEVIKKYKGNENFDHAAYDWRLHSGVTPVKDQKNCGSCWAFSSIGSVESQYAIRKNKLITLSEQELVDCSFKNYGCNGGLINNAFEDMIELGGICTDDDYPYVSDAPNLCNIDRCTEKYGIKNYLSVPDNKLKEALRFLGPISISVAVSDDFAFYKEGIFDGECGDQLNHAVMLVGFGMKEIVNPLTKKGEKHYYYIIKNSWGQQWGERGFINIETDESGLMRKCGLGTDAFIPLIE</sequence>
<reference evidence="37" key="1">
    <citation type="journal article" date="2002" name="Nature">
        <title>Genome sequence of the human malaria parasite Plasmodium falciparum.</title>
        <authorList>
            <person name="Gardner M.J."/>
            <person name="Hall N."/>
            <person name="Fung E."/>
            <person name="White O."/>
            <person name="Berriman M."/>
            <person name="Hyman R.W."/>
            <person name="Carlton J.M."/>
            <person name="Pain A."/>
            <person name="Nelson K.E."/>
            <person name="Bowman S."/>
            <person name="Paulsen I.T."/>
            <person name="James K.D."/>
            <person name="Eisen J.A."/>
            <person name="Rutherford K.M."/>
            <person name="Salzberg S.L."/>
            <person name="Craig A."/>
            <person name="Kyes S."/>
            <person name="Chan M.-S."/>
            <person name="Nene V."/>
            <person name="Shallom S.J."/>
            <person name="Suh B."/>
            <person name="Peterson J."/>
            <person name="Angiuoli S."/>
            <person name="Pertea M."/>
            <person name="Allen J."/>
            <person name="Selengut J."/>
            <person name="Haft D."/>
            <person name="Mather M.W."/>
            <person name="Vaidya A.B."/>
            <person name="Martin D.M.A."/>
            <person name="Fairlamb A.H."/>
            <person name="Fraunholz M.J."/>
            <person name="Roos D.S."/>
            <person name="Ralph S.A."/>
            <person name="McFadden G.I."/>
            <person name="Cummings L.M."/>
            <person name="Subramanian G.M."/>
            <person name="Mungall C."/>
            <person name="Venter J.C."/>
            <person name="Carucci D.J."/>
            <person name="Hoffman S.L."/>
            <person name="Newbold C."/>
            <person name="Davis R.W."/>
            <person name="Fraser C.M."/>
            <person name="Barrell B.G."/>
        </authorList>
    </citation>
    <scope>NUCLEOTIDE SEQUENCE [LARGE SCALE GENOMIC DNA]</scope>
    <source>
        <strain evidence="37">3D7</strain>
    </source>
</reference>
<reference evidence="35" key="2">
    <citation type="journal article" date="2000" name="J. Biol. Chem.">
        <title>Characterization of native and recombinant falcipain-2, a principal trophozoite cysteine protease and essential hemoglobinase of Plasmodium falciparum.</title>
        <authorList>
            <person name="Shenai B.R."/>
            <person name="Sijwali P.S."/>
            <person name="Singh A."/>
            <person name="Rosenthal P.J."/>
        </authorList>
    </citation>
    <scope>FUNCTION</scope>
    <scope>CATALYTIC ACTIVITY</scope>
    <scope>BIOPHYSICOCHEMICAL PROPERTIES</scope>
    <scope>SUBCELLULAR LOCATION</scope>
    <scope>PROTEOLYTIC CLEAVAGE</scope>
    <source>
        <strain evidence="24">W2</strain>
    </source>
</reference>
<reference evidence="35" key="3">
    <citation type="journal article" date="2001" name="Mol. Biochem. Parasitol.">
        <title>Recombinant falcipain-2 cleaves erythrocyte membrane ankyrin and protein 4.1.</title>
        <authorList>
            <person name="Dua M."/>
            <person name="Raphael P."/>
            <person name="Sijwali P.S."/>
            <person name="Rosenthal P.J."/>
            <person name="Hanspal M."/>
        </authorList>
    </citation>
    <scope>FUNCTION</scope>
    <scope>CATALYTIC ACTIVITY</scope>
    <scope>BIOPHYSICOCHEMICAL PROPERTIES</scope>
</reference>
<reference evidence="35" key="4">
    <citation type="journal article" date="2002" name="J. Biol. Chem.">
        <title>Folding of the Plasmodium falciparum cysteine protease falcipain-2 is mediated by a chaperone-like peptide and not the prodomain.</title>
        <authorList>
            <person name="Sijwali P.S."/>
            <person name="Shenai B.R."/>
            <person name="Rosenthal P.J."/>
        </authorList>
    </citation>
    <scope>CATALYTIC ACTIVITY</scope>
    <scope>DOMAIN</scope>
    <scope>MOTIF</scope>
    <scope>PROTEOLYTIC CLEAVAGE</scope>
</reference>
<reference evidence="35" key="5">
    <citation type="journal article" date="2004" name="Proc. Natl. Acad. Sci. U.S.A.">
        <title>Gene disruption confirms a critical role for the cysteine protease falcipain-2 in hemoglobin hydrolysis by Plasmodium falciparum.</title>
        <authorList>
            <person name="Sijwali P.S."/>
            <person name="Rosenthal P.J."/>
        </authorList>
    </citation>
    <scope>FUNCTION</scope>
    <scope>CATALYTIC ACTIVITY</scope>
    <scope>DEVELOPMENTAL STAGE</scope>
    <scope>DISRUPTION PHENOTYPE</scope>
</reference>
<reference evidence="35" key="6">
    <citation type="journal article" date="2005" name="Proc. Natl. Acad. Sci. U.S.A.">
        <title>The Plasmodium falciparum cysteine protease falcipain-2 captures its substrate, hemoglobin, via a unique motif.</title>
        <authorList>
            <person name="Pandey K.C."/>
            <person name="Wang S.X."/>
            <person name="Sijwali P.S."/>
            <person name="Lau A.L."/>
            <person name="McKerrow J.H."/>
            <person name="Rosenthal P.J."/>
        </authorList>
    </citation>
    <scope>FUNCTION</scope>
    <scope>CATALYTIC ACTIVITY</scope>
    <scope>MOTIF</scope>
    <scope>MUTAGENESIS OF 428-GLU--GLY-437</scope>
</reference>
<reference evidence="35" key="7">
    <citation type="journal article" date="2006" name="PLoS Pathog.">
        <title>Falstatin, a cysteine protease inhibitor of Plasmodium falciparum, facilitates erythrocyte invasion.</title>
        <authorList>
            <person name="Pandey K.C."/>
            <person name="Singh N."/>
            <person name="Arastu-Kapur S."/>
            <person name="Bogyo M."/>
            <person name="Rosenthal P.J."/>
        </authorList>
    </citation>
    <scope>CATALYTIC ACTIVITY</scope>
    <scope>ACTIVITY REGULATION</scope>
</reference>
<reference evidence="35" key="8">
    <citation type="journal article" date="2007" name="J. Biol. Chem.">
        <title>Falcipain cysteine proteases require bipartite motifs for trafficking to the Plasmodium falciparum food vacuole.</title>
        <authorList>
            <person name="Subramanian S."/>
            <person name="Sijwali P.S."/>
            <person name="Rosenthal P.J."/>
        </authorList>
    </citation>
    <scope>SUBCELLULAR LOCATION</scope>
    <scope>DEVELOPMENTAL STAGE</scope>
    <scope>MOTIF</scope>
</reference>
<reference evidence="35" key="9">
    <citation type="journal article" date="2009" name="PLoS ONE">
        <title>Hemoglobin cleavage site-specificity of the Plasmodium falciparum cysteine proteases falcipain-2 and falcipain-3.</title>
        <authorList>
            <person name="Subramanian S."/>
            <person name="Hardt M."/>
            <person name="Choe Y."/>
            <person name="Niles R.K."/>
            <person name="Johansen E.B."/>
            <person name="Legac J."/>
            <person name="Gut J."/>
            <person name="Kerr I.D."/>
            <person name="Craik C.S."/>
            <person name="Rosenthal P.J."/>
        </authorList>
    </citation>
    <scope>FUNCTION</scope>
    <scope>CATALYTIC ACTIVITY</scope>
</reference>
<reference evidence="35" key="10">
    <citation type="journal article" date="2013" name="Proc. Natl. Acad. Sci. U.S.A.">
        <title>Protein complex directs hemoglobin-to-hemozoin formation in Plasmodium falciparum.</title>
        <authorList>
            <person name="Chugh M."/>
            <person name="Sundararaman V."/>
            <person name="Kumar S."/>
            <person name="Reddy V.S."/>
            <person name="Siddiqui W.A."/>
            <person name="Stuart K.D."/>
            <person name="Malhotra P."/>
        </authorList>
    </citation>
    <scope>IDENTIFICATION IN THE HEMOZOIN FORMATION COMPLEX</scope>
    <scope>SUBCELLULAR LOCATION</scope>
    <scope>DEVELOPMENTAL STAGE</scope>
    <scope>IDENTIFICATION BY MASS SPECTROMETRY</scope>
</reference>
<reference evidence="35" key="11">
    <citation type="journal article" date="2015" name="Arch. Biochem. Biophys.">
        <title>Allosteric regulation of the Plasmodium falciparum cysteine protease falcipain-2 by heme.</title>
        <authorList>
            <person name="Marques A.F."/>
            <person name="Gomes P.S."/>
            <person name="Oliveira P.L."/>
            <person name="Rosenthal P.J."/>
            <person name="Pascutti P.G."/>
            <person name="Lima L.M."/>
        </authorList>
    </citation>
    <scope>FUNCTION</scope>
    <scope>CATALYTIC ACTIVITY</scope>
    <scope>ACTIVITY REGULATION</scope>
</reference>
<reference evidence="35" key="12">
    <citation type="journal article" date="2023" name="PLoS Pathog.">
        <title>PTEX helps efficiently traffic haemoglobinases to the food vacuole in Plasmodium falciparum.</title>
        <authorList>
            <person name="Jonsdottir T.K."/>
            <person name="Elsworth B."/>
            <person name="Cobbold S."/>
            <person name="Gabriela M."/>
            <person name="Ploeger E."/>
            <person name="Parkyn Schneider M."/>
            <person name="Charnaud S.C."/>
            <person name="Dans M.G."/>
            <person name="McConville M."/>
            <person name="Bullen H.E."/>
            <person name="Crabb B.S."/>
            <person name="Gilson P.R."/>
        </authorList>
    </citation>
    <scope>SUBCELLULAR LOCATION</scope>
    <scope>DISRUPTION PHENOTYPE</scope>
</reference>
<reference evidence="39" key="13">
    <citation type="journal article" date="2006" name="J. Biol. Chem.">
        <title>Structural and functional characterization of Falcipain-2, a hemoglobinase from the malarial parasite Plasmodium falciparum.</title>
        <authorList>
            <person name="Hogg T."/>
            <person name="Nagarajan K."/>
            <person name="Herzberg S."/>
            <person name="Chen L."/>
            <person name="Shen X."/>
            <person name="Jiang H."/>
            <person name="Wecke M."/>
            <person name="Blohmke C."/>
            <person name="Hilgenfeld R."/>
            <person name="Schmidt C.L."/>
        </authorList>
    </citation>
    <scope>X-RAY CRYSTALLOGRAPHY (3.10 ANGSTROMS) OF 244-484 IN COMPLEX WITH INHIBITOR</scope>
    <scope>FUNCTION</scope>
    <scope>CATALYTIC ACTIVITY</scope>
    <scope>BIOPHYSICOCHEMICAL PROPERTIES</scope>
    <scope>PROTEOLYTIC CLEAVAGE</scope>
    <scope>DISULFIDE BONDS</scope>
    <scope>VARIANTS 255-LYS--ASN-257 DELINS ARG-GLY-GLU AND 343-THR--ASP-345 DELINS PRO-ASP-GLY</scope>
    <source>
        <strain evidence="27">D6</strain>
    </source>
</reference>
<reference evidence="38" key="14">
    <citation type="journal article" date="2006" name="Proc. Natl. Acad. Sci. U.S.A.">
        <title>Structural basis for unique mechanisms of folding and hemoglobin binding by a malarial protease.</title>
        <authorList>
            <person name="Wang S.X."/>
            <person name="Pandey K.C."/>
            <person name="Somoza J.R."/>
            <person name="Sijwali P.S."/>
            <person name="Kortemme T."/>
            <person name="Brinen L.S."/>
            <person name="Fletterick R.J."/>
            <person name="Rosenthal P.J."/>
            <person name="McKerrow J.H."/>
        </authorList>
    </citation>
    <scope>X-RAY CRYSTALLOGRAPHY (2.70 ANGSTROMS) OF 244-484 IN COMPLEX WITH CHICKEN CYSTATIN</scope>
    <scope>CATALYTIC ACTIVITY</scope>
    <scope>DISULFIDE BONDS</scope>
    <scope>MUTAGENESIS OF GLU-381</scope>
    <scope>VARIANTS 255-LYS--ASN-257 DELINS ARG-GLY-GLU AND 343-THR--ASP-345 DELINS PRO-ASP-GLY</scope>
    <source>
        <strain evidence="28">D6</strain>
    </source>
</reference>
<reference evidence="40" key="15">
    <citation type="journal article" date="2007" name="Structure">
        <title>The structure of chagasin in complex with a cysteine protease clarifies the binding mode and evolution of an inhibitor family.</title>
        <authorList>
            <person name="Wang S.X."/>
            <person name="Pandey K.C."/>
            <person name="Scharfstein J."/>
            <person name="Whisstock J."/>
            <person name="Huang R.K."/>
            <person name="Jacobelli J."/>
            <person name="Fletterick R.J."/>
            <person name="Rosenthal P.J."/>
            <person name="Abrahamson M."/>
            <person name="Brinen L.S."/>
            <person name="Rossi A."/>
            <person name="Sali A."/>
            <person name="McKerrow J.H."/>
        </authorList>
    </citation>
    <scope>X-RAY CRYSTALLOGRAPHY (2.20 ANGSTROMS) OF 244-484 IN COMPLEX WITH T.CRUZI CHA</scope>
    <scope>DISULFIDE BONDS</scope>
    <scope>VARIANTS 255-LYS--ASN-257 DELINS ARG-GLY-GLU AND 343-THR--ASP-345 DELINS PRO-ASP-GLY</scope>
    <source>
        <strain evidence="29">D6</strain>
    </source>
</reference>
<reference evidence="41" key="16">
    <citation type="journal article" date="2009" name="J. Med. Chem.">
        <title>Structures of falcipain-2 and falcipain-3 bound to small molecule inhibitors: implications for substrate specificity.</title>
        <authorList>
            <person name="Kerr I.D."/>
            <person name="Lee J.H."/>
            <person name="Pandey K.C."/>
            <person name="Harrison A."/>
            <person name="Sajid M."/>
            <person name="Rosenthal P.J."/>
            <person name="Brinen L.S."/>
        </authorList>
    </citation>
    <scope>X-RAY CRYSTALLOGRAPHY (2.90 ANGSTROMS) OF 244-484 IN COMPLEX WITH INHIBITOR</scope>
    <scope>DISULFIDE BONDS</scope>
    <scope>VARIANTS 255-LYS--ASN-257 DELINS ARG-GLY-GLU AND 343-THR--ASP-345 DELINS PRO-ASP-GLY</scope>
    <source>
        <strain evidence="31">D6</strain>
    </source>
</reference>
<reference evidence="42" key="17">
    <citation type="journal article" date="2011" name="Structure">
        <title>Structural basis for the regulation of cysteine-protease activity by a new class of protease inhibitors in Plasmodium.</title>
        <authorList>
            <person name="Hansen G."/>
            <person name="Heitmann A."/>
            <person name="Witt T."/>
            <person name="Li H."/>
            <person name="Jiang H."/>
            <person name="Shen X."/>
            <person name="Heussler V.T."/>
            <person name="Rennenberg A."/>
            <person name="Hilgenfeld R."/>
        </authorList>
    </citation>
    <scope>X-RAY CRYSTALLOGRAPHY (2.60 ANGSTROMS) OF 245-484 IN COMPLEX WITH P.BERGHEI ICP</scope>
    <scope>CATALYTIC ACTIVITY</scope>
    <scope>ACTIVITY REGULATION</scope>
    <scope>DISULFIDE BONDS</scope>
    <scope>VARIANTS 255-LYS--ASN-257 DELINS ARG-GLY-GLU AND 343-THR--ASP-345 DELINS PRO-ASP-GLY</scope>
    <source>
        <strain evidence="32">D6</strain>
    </source>
</reference>
<reference evidence="44" key="18">
    <citation type="journal article" date="2019" name="Malar. J.">
        <title>The complex of Plasmodium falciparum falcipain-2 protease with an (E)-chalcone-based inhibitor highlights a novel, small, molecule-binding site.</title>
        <authorList>
            <person name="Machin J.M."/>
            <person name="Kantsadi A.L."/>
            <person name="Vakonakis I."/>
        </authorList>
    </citation>
    <scope>X-RAY CRYSTALLOGRAPHY (3.45 ANGSTROMS) OF 244-483 IN COMPLEX WITH INHIBITOR</scope>
    <scope>DISULFIDE BONDS</scope>
    <scope>VARIANTS 255-LYS--ASN-257 DELINS ARG-GLY-GLU AND 343-THR--ASP-345 DELINS PRO-ASP-GLY</scope>
    <source>
        <strain evidence="33">D6</strain>
    </source>
</reference>
<reference evidence="43 45" key="19">
    <citation type="journal article" date="2022" name="Biochem. Biophys. Res. Commun.">
        <title>New insights of falcipain 2 structure from Plasmodium falciparum 3D7 strain.</title>
        <authorList>
            <person name="Chakraborty S."/>
            <person name="Alam B."/>
            <person name="Biswas S."/>
        </authorList>
    </citation>
    <scope>X-RAY CRYSTALLOGRAPHY (3.40 ANGSTROMS) OF 244-484 IN COMPLEX WITH INHIBITORS</scope>
    <scope>DISULFIDE BONDS</scope>
    <source>
        <strain evidence="34">3D7</strain>
    </source>
</reference>
<organism evidence="37">
    <name type="scientific">Plasmodium falciparum (isolate 3D7)</name>
    <dbReference type="NCBI Taxonomy" id="36329"/>
    <lineage>
        <taxon>Eukaryota</taxon>
        <taxon>Sar</taxon>
        <taxon>Alveolata</taxon>
        <taxon>Apicomplexa</taxon>
        <taxon>Aconoidasida</taxon>
        <taxon>Haemosporida</taxon>
        <taxon>Plasmodiidae</taxon>
        <taxon>Plasmodium</taxon>
        <taxon>Plasmodium (Laverania)</taxon>
    </lineage>
</organism>
<dbReference type="EC" id="3.4.22.-" evidence="6 7 9 10 11 17 18"/>
<dbReference type="EMBL" id="LN999945">
    <property type="protein sequence ID" value="CZT98817.1"/>
    <property type="molecule type" value="Genomic_DNA"/>
</dbReference>
<dbReference type="RefSeq" id="XP_001347836.1">
    <property type="nucleotide sequence ID" value="XM_001347800.1"/>
</dbReference>
<dbReference type="PDB" id="1YVB">
    <property type="method" value="X-ray"/>
    <property type="resolution" value="2.70 A"/>
    <property type="chains" value="A=244-484"/>
</dbReference>
<dbReference type="PDB" id="2GHU">
    <property type="method" value="X-ray"/>
    <property type="resolution" value="3.10 A"/>
    <property type="chains" value="A/B/C/D=244-484"/>
</dbReference>
<dbReference type="PDB" id="2OUL">
    <property type="method" value="X-ray"/>
    <property type="resolution" value="2.20 A"/>
    <property type="chains" value="A=244-484"/>
</dbReference>
<dbReference type="PDB" id="3BPF">
    <property type="method" value="X-ray"/>
    <property type="resolution" value="2.90 A"/>
    <property type="chains" value="A/B/C/D=244-484"/>
</dbReference>
<dbReference type="PDB" id="3PNR">
    <property type="method" value="X-ray"/>
    <property type="resolution" value="2.60 A"/>
    <property type="chains" value="A=245-484"/>
</dbReference>
<dbReference type="PDB" id="6JW9">
    <property type="method" value="X-ray"/>
    <property type="resolution" value="3.50 A"/>
    <property type="chains" value="A/B=244-484"/>
</dbReference>
<dbReference type="PDB" id="6SSZ">
    <property type="method" value="X-ray"/>
    <property type="resolution" value="3.45 A"/>
    <property type="chains" value="A/B=244-483"/>
</dbReference>
<dbReference type="PDB" id="7EI0">
    <property type="method" value="X-ray"/>
    <property type="resolution" value="3.40 A"/>
    <property type="chains" value="A/B=244-484"/>
</dbReference>
<dbReference type="PDB" id="8GT0">
    <property type="method" value="X-ray"/>
    <property type="resolution" value="3.28 A"/>
    <property type="chains" value="A/C/E=244-484"/>
</dbReference>
<dbReference type="PDB" id="8GT7">
    <property type="method" value="X-ray"/>
    <property type="resolution" value="3.28 A"/>
    <property type="chains" value="A/C=244-484"/>
</dbReference>
<dbReference type="PDBsum" id="1YVB"/>
<dbReference type="PDBsum" id="2GHU"/>
<dbReference type="PDBsum" id="2OUL"/>
<dbReference type="PDBsum" id="3BPF"/>
<dbReference type="PDBsum" id="3PNR"/>
<dbReference type="PDBsum" id="6JW9"/>
<dbReference type="PDBsum" id="6SSZ"/>
<dbReference type="PDBsum" id="7EI0"/>
<dbReference type="PDBsum" id="8GT0"/>
<dbReference type="PDBsum" id="8GT7"/>
<dbReference type="SMR" id="Q8I6U4"/>
<dbReference type="IntAct" id="Q8I6U4">
    <property type="interactions" value="8"/>
</dbReference>
<dbReference type="STRING" id="36329.Q8I6U4"/>
<dbReference type="MEROPS" id="C01.046"/>
<dbReference type="PaxDb" id="5833-PF11_0165"/>
<dbReference type="EnsemblProtists" id="CZT98817">
    <property type="protein sequence ID" value="CZT98817"/>
    <property type="gene ID" value="PF3D7_1115700"/>
</dbReference>
<dbReference type="GeneID" id="810712"/>
<dbReference type="KEGG" id="pfa:PF3D7_1115700"/>
<dbReference type="VEuPathDB" id="PlasmoDB:PF3D7_1115700"/>
<dbReference type="HOGENOM" id="CLU_012184_1_2_1"/>
<dbReference type="InParanoid" id="Q8I6U4"/>
<dbReference type="OMA" id="CIYEYAN"/>
<dbReference type="OrthoDB" id="190265at2759"/>
<dbReference type="PhylomeDB" id="Q8I6U4"/>
<dbReference type="Reactome" id="R-PFA-2132295">
    <property type="pathway name" value="MHC class II antigen presentation"/>
</dbReference>
<dbReference type="Reactome" id="R-PFA-6798695">
    <property type="pathway name" value="Neutrophil degranulation"/>
</dbReference>
<dbReference type="EvolutionaryTrace" id="Q8I6U4"/>
<dbReference type="Proteomes" id="UP000001450">
    <property type="component" value="Chromosome 11"/>
</dbReference>
<dbReference type="GO" id="GO:0005615">
    <property type="term" value="C:extracellular space"/>
    <property type="evidence" value="ECO:0000318"/>
    <property type="project" value="GO_Central"/>
</dbReference>
<dbReference type="GO" id="GO:0020020">
    <property type="term" value="C:food vacuole"/>
    <property type="evidence" value="ECO:0000314"/>
    <property type="project" value="GeneDB"/>
</dbReference>
<dbReference type="GO" id="GO:0005764">
    <property type="term" value="C:lysosome"/>
    <property type="evidence" value="ECO:0000318"/>
    <property type="project" value="GO_Central"/>
</dbReference>
<dbReference type="GO" id="GO:0016020">
    <property type="term" value="C:membrane"/>
    <property type="evidence" value="ECO:0007669"/>
    <property type="project" value="UniProtKB-SubCell"/>
</dbReference>
<dbReference type="GO" id="GO:0004197">
    <property type="term" value="F:cysteine-type endopeptidase activity"/>
    <property type="evidence" value="ECO:0000250"/>
    <property type="project" value="GeneDB"/>
</dbReference>
<dbReference type="GO" id="GO:0006508">
    <property type="term" value="P:proteolysis"/>
    <property type="evidence" value="ECO:0000250"/>
    <property type="project" value="GeneDB"/>
</dbReference>
<dbReference type="GO" id="GO:0051603">
    <property type="term" value="P:proteolysis involved in protein catabolic process"/>
    <property type="evidence" value="ECO:0000318"/>
    <property type="project" value="GO_Central"/>
</dbReference>
<dbReference type="CDD" id="cd02248">
    <property type="entry name" value="Peptidase_C1A"/>
    <property type="match status" value="1"/>
</dbReference>
<dbReference type="FunFam" id="3.90.70.10:FF:000086">
    <property type="entry name" value="Cysteine proteinase falcipain 2a"/>
    <property type="match status" value="1"/>
</dbReference>
<dbReference type="Gene3D" id="1.10.287.2250">
    <property type="match status" value="1"/>
</dbReference>
<dbReference type="Gene3D" id="3.90.70.10">
    <property type="entry name" value="Cysteine proteinases"/>
    <property type="match status" value="1"/>
</dbReference>
<dbReference type="InterPro" id="IPR038765">
    <property type="entry name" value="Papain-like_cys_pep_sf"/>
</dbReference>
<dbReference type="InterPro" id="IPR000169">
    <property type="entry name" value="Pept_cys_AS"/>
</dbReference>
<dbReference type="InterPro" id="IPR025660">
    <property type="entry name" value="Pept_his_AS"/>
</dbReference>
<dbReference type="InterPro" id="IPR013128">
    <property type="entry name" value="Peptidase_C1A"/>
</dbReference>
<dbReference type="InterPro" id="IPR000668">
    <property type="entry name" value="Peptidase_C1A_C"/>
</dbReference>
<dbReference type="InterPro" id="IPR039417">
    <property type="entry name" value="Peptidase_C1A_papain-like"/>
</dbReference>
<dbReference type="InterPro" id="IPR013201">
    <property type="entry name" value="Prot_inhib_I29"/>
</dbReference>
<dbReference type="PANTHER" id="PTHR12411">
    <property type="entry name" value="CYSTEINE PROTEASE FAMILY C1-RELATED"/>
    <property type="match status" value="1"/>
</dbReference>
<dbReference type="Pfam" id="PF08246">
    <property type="entry name" value="Inhibitor_I29"/>
    <property type="match status" value="1"/>
</dbReference>
<dbReference type="Pfam" id="PF00112">
    <property type="entry name" value="Peptidase_C1"/>
    <property type="match status" value="1"/>
</dbReference>
<dbReference type="PRINTS" id="PR00705">
    <property type="entry name" value="PAPAIN"/>
</dbReference>
<dbReference type="SMART" id="SM00848">
    <property type="entry name" value="Inhibitor_I29"/>
    <property type="match status" value="1"/>
</dbReference>
<dbReference type="SMART" id="SM00645">
    <property type="entry name" value="Pept_C1"/>
    <property type="match status" value="1"/>
</dbReference>
<dbReference type="SUPFAM" id="SSF54001">
    <property type="entry name" value="Cysteine proteinases"/>
    <property type="match status" value="1"/>
</dbReference>
<dbReference type="PROSITE" id="PS00139">
    <property type="entry name" value="THIOL_PROTEASE_CYS"/>
    <property type="match status" value="1"/>
</dbReference>
<dbReference type="PROSITE" id="PS00639">
    <property type="entry name" value="THIOL_PROTEASE_HIS"/>
    <property type="match status" value="1"/>
</dbReference>
<gene>
    <name evidence="35" type="primary">FP2A</name>
    <name evidence="25" type="synonym">FP-2</name>
    <name evidence="26" type="synonym">FP2</name>
    <name evidence="36" type="ORF">PF3D7_1115700</name>
</gene>
<feature type="propeptide" id="PRO_0000459156" description="Activation peptide" evidence="8">
    <location>
        <begin position="1"/>
        <end position="243"/>
    </location>
</feature>
<feature type="chain" id="PRO_0000459157" description="Falcipain-2a">
    <location>
        <begin position="244"/>
        <end position="484"/>
    </location>
</feature>
<feature type="topological domain" description="Cytoplasmic" evidence="35">
    <location>
        <begin position="1"/>
        <end position="35"/>
    </location>
</feature>
<feature type="transmembrane region" description="Helical; Signal-anchor for type II membrane protein" evidence="1">
    <location>
        <begin position="36"/>
        <end position="56"/>
    </location>
</feature>
<feature type="topological domain" description="Lumenal" evidence="35">
    <location>
        <begin position="57"/>
        <end position="484"/>
    </location>
</feature>
<feature type="short sequence motif" description="Bipartite vacuolar targeting signal 1" evidence="15">
    <location>
        <begin position="16"/>
        <end position="25"/>
    </location>
</feature>
<feature type="short sequence motif" description="Bipartite vacuolar targeting signal 2" evidence="15">
    <location>
        <begin position="84"/>
        <end position="105"/>
    </location>
</feature>
<feature type="short sequence motif" description="Nose motif; required for the correct folding of the mature form" evidence="8">
    <location>
        <begin position="244"/>
        <end position="260"/>
    </location>
</feature>
<feature type="short sequence motif" description="Arm motif; binds to host hemoglobin and required for the inhibitory interaction between the propeptide and the catalytic domain" evidence="10">
    <location>
        <begin position="428"/>
        <end position="437"/>
    </location>
</feature>
<feature type="active site" evidence="3">
    <location>
        <position position="285"/>
    </location>
</feature>
<feature type="active site" evidence="4">
    <location>
        <position position="417"/>
    </location>
</feature>
<feature type="active site" evidence="5">
    <location>
        <position position="447"/>
    </location>
</feature>
<feature type="glycosylation site" description="N-linked (GlcNAc...) asparagine" evidence="2">
    <location>
        <position position="67"/>
    </location>
</feature>
<feature type="disulfide bond" evidence="11 12 14 16 18 21 22 38 39 40 41 42 43 44 45">
    <location>
        <begin position="282"/>
        <end position="323"/>
    </location>
</feature>
<feature type="disulfide bond" evidence="11 12 14 16 18 21 22 38 39 40 41 42 43 44 45">
    <location>
        <begin position="316"/>
        <end position="357"/>
    </location>
</feature>
<feature type="disulfide bond" evidence="11 12 14 16 18 21 22 38 39 40 41 42 43 44 45">
    <location>
        <begin position="342"/>
        <end position="362"/>
    </location>
</feature>
<feature type="disulfide bond" evidence="11 12 14 16 18 21 22 38 39 40 41 42 43 44 45">
    <location>
        <begin position="411"/>
        <end position="472"/>
    </location>
</feature>
<feature type="sequence variant" description="In strain: D6." evidence="11 12 14 16 18 21">
    <original>KGN</original>
    <variation>RGE</variation>
    <location>
        <begin position="255"/>
        <end position="257"/>
    </location>
</feature>
<feature type="sequence variant" description="In strain: D6." evidence="11 12 14 16 18 21">
    <original>TDD</original>
    <variation>PDG</variation>
    <location>
        <begin position="343"/>
        <end position="345"/>
    </location>
</feature>
<feature type="mutagenesis site" description="Loss of catalytic activity. Impairs correct mature protein folding." evidence="12">
    <original>E</original>
    <variation>A</variation>
    <location>
        <position position="381"/>
    </location>
</feature>
<feature type="mutagenesis site" description="No binding to host hemoglobin. Loss of host hemoglobin and globin hydrolysis. No effect on peptide substrate, casein or gelatin hydrolysis. Reduces the inhibition of catalytic domain by the prodomain." evidence="10">
    <location>
        <begin position="428"/>
        <end position="437"/>
    </location>
</feature>
<feature type="helix" evidence="48">
    <location>
        <begin position="247"/>
        <end position="255"/>
    </location>
</feature>
<feature type="helix" evidence="48">
    <location>
        <begin position="267"/>
        <end position="269"/>
    </location>
</feature>
<feature type="strand" evidence="48">
    <location>
        <begin position="281"/>
        <end position="283"/>
    </location>
</feature>
<feature type="helix" evidence="48">
    <location>
        <begin position="285"/>
        <end position="302"/>
    </location>
</feature>
<feature type="helix" evidence="48">
    <location>
        <begin position="310"/>
        <end position="316"/>
    </location>
</feature>
<feature type="turn" evidence="47">
    <location>
        <begin position="318"/>
        <end position="323"/>
    </location>
</feature>
<feature type="helix" evidence="48">
    <location>
        <begin position="328"/>
        <end position="337"/>
    </location>
</feature>
<feature type="strand" evidence="51">
    <location>
        <begin position="340"/>
        <end position="343"/>
    </location>
</feature>
<feature type="turn" evidence="50">
    <location>
        <begin position="344"/>
        <end position="346"/>
    </location>
</feature>
<feature type="strand" evidence="52">
    <location>
        <begin position="351"/>
        <end position="353"/>
    </location>
</feature>
<feature type="strand" evidence="48">
    <location>
        <begin position="361"/>
        <end position="363"/>
    </location>
</feature>
<feature type="strand" evidence="48">
    <location>
        <begin position="369"/>
        <end position="373"/>
    </location>
</feature>
<feature type="helix" evidence="49">
    <location>
        <begin position="376"/>
        <end position="378"/>
    </location>
</feature>
<feature type="helix" evidence="48">
    <location>
        <begin position="379"/>
        <end position="385"/>
    </location>
</feature>
<feature type="strand" evidence="48">
    <location>
        <begin position="389"/>
        <end position="393"/>
    </location>
</feature>
<feature type="helix" evidence="48">
    <location>
        <begin position="397"/>
        <end position="400"/>
    </location>
</feature>
<feature type="strand" evidence="48">
    <location>
        <begin position="404"/>
        <end position="406"/>
    </location>
</feature>
<feature type="strand" evidence="48">
    <location>
        <begin position="417"/>
        <end position="430"/>
    </location>
</feature>
<feature type="turn" evidence="48">
    <location>
        <begin position="432"/>
        <end position="434"/>
    </location>
</feature>
<feature type="strand" evidence="48">
    <location>
        <begin position="436"/>
        <end position="446"/>
    </location>
</feature>
<feature type="strand" evidence="46">
    <location>
        <begin position="451"/>
        <end position="453"/>
    </location>
</feature>
<feature type="turn" evidence="52">
    <location>
        <begin position="454"/>
        <end position="457"/>
    </location>
</feature>
<feature type="strand" evidence="48">
    <location>
        <begin position="458"/>
        <end position="463"/>
    </location>
</feature>
<feature type="strand" evidence="48">
    <location>
        <begin position="465"/>
        <end position="467"/>
    </location>
</feature>
<feature type="helix" evidence="48">
    <location>
        <begin position="471"/>
        <end position="473"/>
    </location>
</feature>
<feature type="strand" evidence="48">
    <location>
        <begin position="476"/>
        <end position="482"/>
    </location>
</feature>
<protein>
    <recommendedName>
        <fullName evidence="35">Falcipain-2a</fullName>
        <ecNumber evidence="6 7 9 10 11 17 18">3.4.22.-</ecNumber>
    </recommendedName>
    <alternativeName>
        <fullName evidence="35">Cysteine proteinase falcipain-2a</fullName>
    </alternativeName>
    <alternativeName>
        <fullName evidence="24">Falcipain-2</fullName>
    </alternativeName>
</protein>
<comment type="function">
    <text evidence="6 7 9 10 11 17 20">Cysteine protease which cleaves native host hemoglobin and globin in the food vacuole during the asexual blood stage (PubMed:10887194, PubMed:15070727, PubMed:15964982, PubMed:16777845, PubMed:19357776, PubMed:25791019). The binding to host hemoglobin is pH-sensitive and only occurs at acidic pH (PubMed:16777845). Cleaves ankyrin and protein 4.1, two components of host erythrocyte membrane cytoskeleton required for the stability of the erythrocyte membrane, and thus may be involved in parasite release (PubMed:11463472). Preferentially cleaves substrates which have an arginine or lysine at the P1 position and a leucine or phenylalanine at the P2 position (PubMed:10887194, PubMed:19357776).</text>
</comment>
<comment type="activity regulation">
    <text evidence="13 18 20">Inhibited by cysteine protease inhibitor ICP (PubMed:17083274, PubMed:21742259). Inhibited by heme and heme analogs (PubMed:25791019).</text>
</comment>
<comment type="biophysicochemical properties">
    <phDependence>
        <text evidence="6 7 11">Optimum pH is 4.5-5.5 for host hemoglobin (PubMed:10887194). Optimum pH is 5-6 for host globin (PubMed:10887194). Optimum pH is 7-7.5 for host ankyrin (PubMed:11463472). Optimum pH is 5-6.5 for synthetic substrates (PubMed:10887194, PubMed:16777845).</text>
    </phDependence>
</comment>
<comment type="subunit">
    <text evidence="19">Component of the hemozoin formation complex (HFC) composed of falcipains FP2A and/or FP2B, plasmepsins PMII, PMIII/HAP and PMIV, heme detoxifying protein HDP and falcilysin FLN (PubMed:23471987). The HFC complex is involved in hemoglobin degradation and detoxification of heme in the food vacuole during the asexual blood stage (PubMed:23471987).</text>
</comment>
<comment type="subcellular location">
    <subcellularLocation>
        <location evidence="6 15 19 23">Vacuole</location>
    </subcellularLocation>
    <subcellularLocation>
        <location evidence="30">Membrane</location>
        <topology evidence="23">Single-pass type II membrane protein</topology>
    </subcellularLocation>
    <text evidence="6 15 23">In trophozoites, localizes to the digestive (or food) vacuole, an acidic vacuole where host hemoglobin is digested (PubMed:10887194, PubMed:17565983). Localizes to the cell membrane prior to its trafficking to the food vacuole (PubMed:37523385).</text>
</comment>
<comment type="developmental stage">
    <text evidence="9 15 19">During the asexual blood stage, expression begins in early trophozoites and decreases in late schizonts (at protein level).</text>
</comment>
<comment type="domain">
    <text evidence="8">The propeptide is not required for the folding or final catalytic activity of the active enzyme.</text>
</comment>
<comment type="PTM">
    <text evidence="6 8 11">Auto-cleaved to remove the propeptide.</text>
</comment>
<comment type="disruption phenotype">
    <text evidence="9 23">In early trophozoites, the food vacuole is swollen with the accumulation of undigested host hemoglobin; however, in the subsequent stages the parasite recovers, and parasite development proceeds normally (PubMed:15070727, PubMed:37523385). Induces expression of FP2B/falcipain-2b and FP3/falcipain-3 in trophozoites (PubMed:15070727).</text>
</comment>
<comment type="similarity">
    <text evidence="35">Belongs to the peptidase C1 family.</text>
</comment>
<proteinExistence type="evidence at protein level"/>
<evidence type="ECO:0000255" key="1"/>
<evidence type="ECO:0000255" key="2">
    <source>
        <dbReference type="PROSITE-ProRule" id="PRU00498"/>
    </source>
</evidence>
<evidence type="ECO:0000255" key="3">
    <source>
        <dbReference type="PROSITE-ProRule" id="PRU10088"/>
    </source>
</evidence>
<evidence type="ECO:0000255" key="4">
    <source>
        <dbReference type="PROSITE-ProRule" id="PRU10089"/>
    </source>
</evidence>
<evidence type="ECO:0000255" key="5">
    <source>
        <dbReference type="PROSITE-ProRule" id="PRU10090"/>
    </source>
</evidence>
<evidence type="ECO:0000269" key="6">
    <source>
    </source>
</evidence>
<evidence type="ECO:0000269" key="7">
    <source>
    </source>
</evidence>
<evidence type="ECO:0000269" key="8">
    <source>
    </source>
</evidence>
<evidence type="ECO:0000269" key="9">
    <source>
    </source>
</evidence>
<evidence type="ECO:0000269" key="10">
    <source>
    </source>
</evidence>
<evidence type="ECO:0000269" key="11">
    <source>
    </source>
</evidence>
<evidence type="ECO:0000269" key="12">
    <source>
    </source>
</evidence>
<evidence type="ECO:0000269" key="13">
    <source>
    </source>
</evidence>
<evidence type="ECO:0000269" key="14">
    <source>
    </source>
</evidence>
<evidence type="ECO:0000269" key="15">
    <source>
    </source>
</evidence>
<evidence type="ECO:0000269" key="16">
    <source>
    </source>
</evidence>
<evidence type="ECO:0000269" key="17">
    <source>
    </source>
</evidence>
<evidence type="ECO:0000269" key="18">
    <source>
    </source>
</evidence>
<evidence type="ECO:0000269" key="19">
    <source>
    </source>
</evidence>
<evidence type="ECO:0000269" key="20">
    <source>
    </source>
</evidence>
<evidence type="ECO:0000269" key="21">
    <source>
    </source>
</evidence>
<evidence type="ECO:0000269" key="22">
    <source>
    </source>
</evidence>
<evidence type="ECO:0000269" key="23">
    <source>
    </source>
</evidence>
<evidence type="ECO:0000303" key="24">
    <source>
    </source>
</evidence>
<evidence type="ECO:0000303" key="25">
    <source>
    </source>
</evidence>
<evidence type="ECO:0000303" key="26">
    <source>
    </source>
</evidence>
<evidence type="ECO:0000303" key="27">
    <source>
    </source>
</evidence>
<evidence type="ECO:0000303" key="28">
    <source>
    </source>
</evidence>
<evidence type="ECO:0000303" key="29">
    <source>
    </source>
</evidence>
<evidence type="ECO:0000303" key="30">
    <source>
    </source>
</evidence>
<evidence type="ECO:0000303" key="31">
    <source>
    </source>
</evidence>
<evidence type="ECO:0000303" key="32">
    <source>
    </source>
</evidence>
<evidence type="ECO:0000303" key="33">
    <source>
    </source>
</evidence>
<evidence type="ECO:0000303" key="34">
    <source>
    </source>
</evidence>
<evidence type="ECO:0000305" key="35"/>
<evidence type="ECO:0000312" key="36">
    <source>
        <dbReference type="EMBL" id="CZT98817.1"/>
    </source>
</evidence>
<evidence type="ECO:0000312" key="37">
    <source>
        <dbReference type="Proteomes" id="UP000001450"/>
    </source>
</evidence>
<evidence type="ECO:0007744" key="38">
    <source>
        <dbReference type="PDB" id="1YVB"/>
    </source>
</evidence>
<evidence type="ECO:0007744" key="39">
    <source>
        <dbReference type="PDB" id="2GHU"/>
    </source>
</evidence>
<evidence type="ECO:0007744" key="40">
    <source>
        <dbReference type="PDB" id="2OUL"/>
    </source>
</evidence>
<evidence type="ECO:0007744" key="41">
    <source>
        <dbReference type="PDB" id="3BPF"/>
    </source>
</evidence>
<evidence type="ECO:0007744" key="42">
    <source>
        <dbReference type="PDB" id="3PNR"/>
    </source>
</evidence>
<evidence type="ECO:0007744" key="43">
    <source>
        <dbReference type="PDB" id="6JW9"/>
    </source>
</evidence>
<evidence type="ECO:0007744" key="44">
    <source>
        <dbReference type="PDB" id="6SSZ"/>
    </source>
</evidence>
<evidence type="ECO:0007744" key="45">
    <source>
        <dbReference type="PDB" id="7EI0"/>
    </source>
</evidence>
<evidence type="ECO:0007829" key="46">
    <source>
        <dbReference type="PDB" id="1YVB"/>
    </source>
</evidence>
<evidence type="ECO:0007829" key="47">
    <source>
        <dbReference type="PDB" id="2GHU"/>
    </source>
</evidence>
<evidence type="ECO:0007829" key="48">
    <source>
        <dbReference type="PDB" id="2OUL"/>
    </source>
</evidence>
<evidence type="ECO:0007829" key="49">
    <source>
        <dbReference type="PDB" id="3BPF"/>
    </source>
</evidence>
<evidence type="ECO:0007829" key="50">
    <source>
        <dbReference type="PDB" id="3PNR"/>
    </source>
</evidence>
<evidence type="ECO:0007829" key="51">
    <source>
        <dbReference type="PDB" id="7EI0"/>
    </source>
</evidence>
<evidence type="ECO:0007829" key="52">
    <source>
        <dbReference type="PDB" id="8GT0"/>
    </source>
</evidence>
<name>FPC2A_PLAF7</name>
<keyword id="KW-0002">3D-structure</keyword>
<keyword id="KW-1015">Disulfide bond</keyword>
<keyword id="KW-0325">Glycoprotein</keyword>
<keyword id="KW-0378">Hydrolase</keyword>
<keyword id="KW-0472">Membrane</keyword>
<keyword id="KW-0645">Protease</keyword>
<keyword id="KW-1185">Reference proteome</keyword>
<keyword id="KW-0735">Signal-anchor</keyword>
<keyword id="KW-0788">Thiol protease</keyword>
<keyword id="KW-0812">Transmembrane</keyword>
<keyword id="KW-1133">Transmembrane helix</keyword>
<keyword id="KW-0926">Vacuole</keyword>
<keyword id="KW-0865">Zymogen</keyword>